<keyword id="KW-0131">Cell cycle</keyword>
<keyword id="KW-0132">Cell division</keyword>
<keyword id="KW-0159">Chromosome partition</keyword>
<keyword id="KW-0963">Cytoplasm</keyword>
<keyword id="KW-0229">DNA integration</keyword>
<keyword id="KW-0233">DNA recombination</keyword>
<keyword id="KW-0238">DNA-binding</keyword>
<feature type="chain" id="PRO_1000070025" description="Tyrosine recombinase XerC">
    <location>
        <begin position="1"/>
        <end position="303"/>
    </location>
</feature>
<feature type="domain" description="Core-binding (CB)" evidence="3">
    <location>
        <begin position="1"/>
        <end position="85"/>
    </location>
</feature>
<feature type="domain" description="Tyr recombinase" evidence="2">
    <location>
        <begin position="106"/>
        <end position="285"/>
    </location>
</feature>
<feature type="active site" evidence="1">
    <location>
        <position position="146"/>
    </location>
</feature>
<feature type="active site" evidence="1">
    <location>
        <position position="170"/>
    </location>
</feature>
<feature type="active site" evidence="1">
    <location>
        <position position="237"/>
    </location>
</feature>
<feature type="active site" evidence="1">
    <location>
        <position position="240"/>
    </location>
</feature>
<feature type="active site" evidence="1">
    <location>
        <position position="263"/>
    </location>
</feature>
<feature type="active site" description="O-(3'-phospho-DNA)-tyrosine intermediate" evidence="1">
    <location>
        <position position="272"/>
    </location>
</feature>
<name>XERC_PSEAB</name>
<evidence type="ECO:0000255" key="1">
    <source>
        <dbReference type="HAMAP-Rule" id="MF_01808"/>
    </source>
</evidence>
<evidence type="ECO:0000255" key="2">
    <source>
        <dbReference type="PROSITE-ProRule" id="PRU01246"/>
    </source>
</evidence>
<evidence type="ECO:0000255" key="3">
    <source>
        <dbReference type="PROSITE-ProRule" id="PRU01248"/>
    </source>
</evidence>
<sequence length="303" mass="33870">MRADLDAFLEHLRSERQVSAHTLDGYRRDLLKILALAEKAGLSDWNALDTRSLRTFVARLHQQGQSSRSLARLLSATRGLYQYLLREGRCRHDPANGLSAPKSPRKLPRTLDADRALQLLDGAVEDDFIARRDQALLELFYSSGLRLSELVGLDLEWLDLKEGLVRVRGKGNKVRELPVGKAARQALEAWLPLRAQAAPEDGAVFIGRGGKRLTPRAIQLRVRQAGVRELGQHLHPHMLRHSFASHLLESSGDLRAVQELLGHADIATTQIYTHLDFQHLASVYDRAHPRAKRKGNADGGNDP</sequence>
<organism>
    <name type="scientific">Pseudomonas aeruginosa (strain UCBPP-PA14)</name>
    <dbReference type="NCBI Taxonomy" id="208963"/>
    <lineage>
        <taxon>Bacteria</taxon>
        <taxon>Pseudomonadati</taxon>
        <taxon>Pseudomonadota</taxon>
        <taxon>Gammaproteobacteria</taxon>
        <taxon>Pseudomonadales</taxon>
        <taxon>Pseudomonadaceae</taxon>
        <taxon>Pseudomonas</taxon>
    </lineage>
</organism>
<accession>Q02E82</accession>
<gene>
    <name evidence="1" type="primary">xerC</name>
    <name type="ordered locus">PA14_69710</name>
</gene>
<protein>
    <recommendedName>
        <fullName evidence="1">Tyrosine recombinase XerC</fullName>
    </recommendedName>
</protein>
<comment type="function">
    <text evidence="1">Site-specific tyrosine recombinase, which acts by catalyzing the cutting and rejoining of the recombining DNA molecules. The XerC-XerD complex is essential to convert dimers of the bacterial chromosome into monomers to permit their segregation at cell division. It also contributes to the segregational stability of plasmids.</text>
</comment>
<comment type="subunit">
    <text evidence="1">Forms a cyclic heterotetrameric complex composed of two molecules of XerC and two molecules of XerD.</text>
</comment>
<comment type="subcellular location">
    <subcellularLocation>
        <location evidence="1">Cytoplasm</location>
    </subcellularLocation>
</comment>
<comment type="similarity">
    <text evidence="1">Belongs to the 'phage' integrase family. XerC subfamily.</text>
</comment>
<proteinExistence type="inferred from homology"/>
<reference key="1">
    <citation type="journal article" date="2006" name="Genome Biol.">
        <title>Genomic analysis reveals that Pseudomonas aeruginosa virulence is combinatorial.</title>
        <authorList>
            <person name="Lee D.G."/>
            <person name="Urbach J.M."/>
            <person name="Wu G."/>
            <person name="Liberati N.T."/>
            <person name="Feinbaum R.L."/>
            <person name="Miyata S."/>
            <person name="Diggins L.T."/>
            <person name="He J."/>
            <person name="Saucier M."/>
            <person name="Deziel E."/>
            <person name="Friedman L."/>
            <person name="Li L."/>
            <person name="Grills G."/>
            <person name="Montgomery K."/>
            <person name="Kucherlapati R."/>
            <person name="Rahme L.G."/>
            <person name="Ausubel F.M."/>
        </authorList>
    </citation>
    <scope>NUCLEOTIDE SEQUENCE [LARGE SCALE GENOMIC DNA]</scope>
    <source>
        <strain>UCBPP-PA14</strain>
    </source>
</reference>
<dbReference type="EMBL" id="CP000438">
    <property type="protein sequence ID" value="ABJ14665.1"/>
    <property type="molecule type" value="Genomic_DNA"/>
</dbReference>
<dbReference type="RefSeq" id="WP_003096434.1">
    <property type="nucleotide sequence ID" value="NZ_CP034244.1"/>
</dbReference>
<dbReference type="SMR" id="Q02E82"/>
<dbReference type="KEGG" id="pau:PA14_69710"/>
<dbReference type="PseudoCAP" id="PA14_69710"/>
<dbReference type="HOGENOM" id="CLU_027562_9_0_6"/>
<dbReference type="BioCyc" id="PAER208963:G1G74-5873-MONOMER"/>
<dbReference type="Proteomes" id="UP000000653">
    <property type="component" value="Chromosome"/>
</dbReference>
<dbReference type="GO" id="GO:0005737">
    <property type="term" value="C:cytoplasm"/>
    <property type="evidence" value="ECO:0007669"/>
    <property type="project" value="UniProtKB-SubCell"/>
</dbReference>
<dbReference type="GO" id="GO:0003677">
    <property type="term" value="F:DNA binding"/>
    <property type="evidence" value="ECO:0007669"/>
    <property type="project" value="UniProtKB-KW"/>
</dbReference>
<dbReference type="GO" id="GO:0009037">
    <property type="term" value="F:tyrosine-based site-specific recombinase activity"/>
    <property type="evidence" value="ECO:0007669"/>
    <property type="project" value="UniProtKB-UniRule"/>
</dbReference>
<dbReference type="GO" id="GO:0051301">
    <property type="term" value="P:cell division"/>
    <property type="evidence" value="ECO:0007669"/>
    <property type="project" value="UniProtKB-KW"/>
</dbReference>
<dbReference type="GO" id="GO:0007059">
    <property type="term" value="P:chromosome segregation"/>
    <property type="evidence" value="ECO:0007669"/>
    <property type="project" value="UniProtKB-UniRule"/>
</dbReference>
<dbReference type="GO" id="GO:0006313">
    <property type="term" value="P:DNA transposition"/>
    <property type="evidence" value="ECO:0007669"/>
    <property type="project" value="UniProtKB-UniRule"/>
</dbReference>
<dbReference type="CDD" id="cd00798">
    <property type="entry name" value="INT_XerDC_C"/>
    <property type="match status" value="1"/>
</dbReference>
<dbReference type="Gene3D" id="1.10.150.130">
    <property type="match status" value="1"/>
</dbReference>
<dbReference type="Gene3D" id="1.10.443.10">
    <property type="entry name" value="Intergrase catalytic core"/>
    <property type="match status" value="1"/>
</dbReference>
<dbReference type="HAMAP" id="MF_01808">
    <property type="entry name" value="Recomb_XerC_XerD"/>
    <property type="match status" value="1"/>
</dbReference>
<dbReference type="InterPro" id="IPR044068">
    <property type="entry name" value="CB"/>
</dbReference>
<dbReference type="InterPro" id="IPR011010">
    <property type="entry name" value="DNA_brk_join_enz"/>
</dbReference>
<dbReference type="InterPro" id="IPR013762">
    <property type="entry name" value="Integrase-like_cat_sf"/>
</dbReference>
<dbReference type="InterPro" id="IPR002104">
    <property type="entry name" value="Integrase_catalytic"/>
</dbReference>
<dbReference type="InterPro" id="IPR010998">
    <property type="entry name" value="Integrase_recombinase_N"/>
</dbReference>
<dbReference type="InterPro" id="IPR004107">
    <property type="entry name" value="Integrase_SAM-like_N"/>
</dbReference>
<dbReference type="InterPro" id="IPR011931">
    <property type="entry name" value="Recomb_XerC"/>
</dbReference>
<dbReference type="InterPro" id="IPR023009">
    <property type="entry name" value="Tyrosine_recombinase_XerC/XerD"/>
</dbReference>
<dbReference type="InterPro" id="IPR050090">
    <property type="entry name" value="Tyrosine_recombinase_XerCD"/>
</dbReference>
<dbReference type="NCBIfam" id="NF001399">
    <property type="entry name" value="PRK00283.1"/>
    <property type="match status" value="1"/>
</dbReference>
<dbReference type="NCBIfam" id="TIGR02224">
    <property type="entry name" value="recomb_XerC"/>
    <property type="match status" value="1"/>
</dbReference>
<dbReference type="PANTHER" id="PTHR30349">
    <property type="entry name" value="PHAGE INTEGRASE-RELATED"/>
    <property type="match status" value="1"/>
</dbReference>
<dbReference type="PANTHER" id="PTHR30349:SF81">
    <property type="entry name" value="TYROSINE RECOMBINASE XERC"/>
    <property type="match status" value="1"/>
</dbReference>
<dbReference type="Pfam" id="PF02899">
    <property type="entry name" value="Phage_int_SAM_1"/>
    <property type="match status" value="1"/>
</dbReference>
<dbReference type="Pfam" id="PF00589">
    <property type="entry name" value="Phage_integrase"/>
    <property type="match status" value="1"/>
</dbReference>
<dbReference type="SUPFAM" id="SSF56349">
    <property type="entry name" value="DNA breaking-rejoining enzymes"/>
    <property type="match status" value="1"/>
</dbReference>
<dbReference type="SUPFAM" id="SSF47823">
    <property type="entry name" value="lambda integrase-like, N-terminal domain"/>
    <property type="match status" value="1"/>
</dbReference>
<dbReference type="PROSITE" id="PS51900">
    <property type="entry name" value="CB"/>
    <property type="match status" value="1"/>
</dbReference>
<dbReference type="PROSITE" id="PS51898">
    <property type="entry name" value="TYR_RECOMBINASE"/>
    <property type="match status" value="1"/>
</dbReference>